<organism>
    <name type="scientific">Thiobacillus denitrificans (strain ATCC 25259 / T1)</name>
    <dbReference type="NCBI Taxonomy" id="292415"/>
    <lineage>
        <taxon>Bacteria</taxon>
        <taxon>Pseudomonadati</taxon>
        <taxon>Pseudomonadota</taxon>
        <taxon>Betaproteobacteria</taxon>
        <taxon>Nitrosomonadales</taxon>
        <taxon>Thiobacillaceae</taxon>
        <taxon>Thiobacillus</taxon>
    </lineage>
</organism>
<gene>
    <name evidence="1" type="primary">nadK</name>
    <name type="ordered locus">Tbd_2031</name>
</gene>
<proteinExistence type="inferred from homology"/>
<dbReference type="EC" id="2.7.1.23" evidence="1"/>
<dbReference type="EMBL" id="CP000116">
    <property type="protein sequence ID" value="AAZ97984.1"/>
    <property type="molecule type" value="Genomic_DNA"/>
</dbReference>
<dbReference type="RefSeq" id="WP_011312543.1">
    <property type="nucleotide sequence ID" value="NC_007404.1"/>
</dbReference>
<dbReference type="SMR" id="Q3SHA5"/>
<dbReference type="STRING" id="292415.Tbd_2031"/>
<dbReference type="KEGG" id="tbd:Tbd_2031"/>
<dbReference type="eggNOG" id="COG0061">
    <property type="taxonomic scope" value="Bacteria"/>
</dbReference>
<dbReference type="HOGENOM" id="CLU_008831_0_1_4"/>
<dbReference type="OrthoDB" id="9774737at2"/>
<dbReference type="Proteomes" id="UP000008291">
    <property type="component" value="Chromosome"/>
</dbReference>
<dbReference type="GO" id="GO:0005737">
    <property type="term" value="C:cytoplasm"/>
    <property type="evidence" value="ECO:0007669"/>
    <property type="project" value="UniProtKB-SubCell"/>
</dbReference>
<dbReference type="GO" id="GO:0005524">
    <property type="term" value="F:ATP binding"/>
    <property type="evidence" value="ECO:0007669"/>
    <property type="project" value="UniProtKB-KW"/>
</dbReference>
<dbReference type="GO" id="GO:0046872">
    <property type="term" value="F:metal ion binding"/>
    <property type="evidence" value="ECO:0007669"/>
    <property type="project" value="UniProtKB-UniRule"/>
</dbReference>
<dbReference type="GO" id="GO:0051287">
    <property type="term" value="F:NAD binding"/>
    <property type="evidence" value="ECO:0007669"/>
    <property type="project" value="UniProtKB-ARBA"/>
</dbReference>
<dbReference type="GO" id="GO:0003951">
    <property type="term" value="F:NAD+ kinase activity"/>
    <property type="evidence" value="ECO:0007669"/>
    <property type="project" value="UniProtKB-UniRule"/>
</dbReference>
<dbReference type="GO" id="GO:0019674">
    <property type="term" value="P:NAD metabolic process"/>
    <property type="evidence" value="ECO:0007669"/>
    <property type="project" value="InterPro"/>
</dbReference>
<dbReference type="GO" id="GO:0006741">
    <property type="term" value="P:NADP biosynthetic process"/>
    <property type="evidence" value="ECO:0007669"/>
    <property type="project" value="UniProtKB-UniRule"/>
</dbReference>
<dbReference type="Gene3D" id="3.40.50.10330">
    <property type="entry name" value="Probable inorganic polyphosphate/atp-NAD kinase, domain 1"/>
    <property type="match status" value="1"/>
</dbReference>
<dbReference type="Gene3D" id="2.60.200.30">
    <property type="entry name" value="Probable inorganic polyphosphate/atp-NAD kinase, domain 2"/>
    <property type="match status" value="1"/>
</dbReference>
<dbReference type="HAMAP" id="MF_00361">
    <property type="entry name" value="NAD_kinase"/>
    <property type="match status" value="1"/>
</dbReference>
<dbReference type="InterPro" id="IPR017438">
    <property type="entry name" value="ATP-NAD_kinase_N"/>
</dbReference>
<dbReference type="InterPro" id="IPR017437">
    <property type="entry name" value="ATP-NAD_kinase_PpnK-typ_C"/>
</dbReference>
<dbReference type="InterPro" id="IPR016064">
    <property type="entry name" value="NAD/diacylglycerol_kinase_sf"/>
</dbReference>
<dbReference type="InterPro" id="IPR002504">
    <property type="entry name" value="NADK"/>
</dbReference>
<dbReference type="NCBIfam" id="NF002306">
    <property type="entry name" value="PRK01231.1"/>
    <property type="match status" value="1"/>
</dbReference>
<dbReference type="NCBIfam" id="NF002561">
    <property type="entry name" value="PRK02155.1"/>
    <property type="match status" value="1"/>
</dbReference>
<dbReference type="PANTHER" id="PTHR20275">
    <property type="entry name" value="NAD KINASE"/>
    <property type="match status" value="1"/>
</dbReference>
<dbReference type="PANTHER" id="PTHR20275:SF0">
    <property type="entry name" value="NAD KINASE"/>
    <property type="match status" value="1"/>
</dbReference>
<dbReference type="Pfam" id="PF01513">
    <property type="entry name" value="NAD_kinase"/>
    <property type="match status" value="1"/>
</dbReference>
<dbReference type="Pfam" id="PF20143">
    <property type="entry name" value="NAD_kinase_C"/>
    <property type="match status" value="1"/>
</dbReference>
<dbReference type="SUPFAM" id="SSF111331">
    <property type="entry name" value="NAD kinase/diacylglycerol kinase-like"/>
    <property type="match status" value="1"/>
</dbReference>
<accession>Q3SHA5</accession>
<evidence type="ECO:0000255" key="1">
    <source>
        <dbReference type="HAMAP-Rule" id="MF_00361"/>
    </source>
</evidence>
<protein>
    <recommendedName>
        <fullName evidence="1">NAD kinase</fullName>
        <ecNumber evidence="1">2.7.1.23</ecNumber>
    </recommendedName>
    <alternativeName>
        <fullName evidence="1">ATP-dependent NAD kinase</fullName>
    </alternativeName>
</protein>
<keyword id="KW-0067">ATP-binding</keyword>
<keyword id="KW-0963">Cytoplasm</keyword>
<keyword id="KW-0418">Kinase</keyword>
<keyword id="KW-0520">NAD</keyword>
<keyword id="KW-0521">NADP</keyword>
<keyword id="KW-0547">Nucleotide-binding</keyword>
<keyword id="KW-1185">Reference proteome</keyword>
<keyword id="KW-0808">Transferase</keyword>
<sequence length="290" mass="31603">MQIPFHTVGLVGKYDNQGMEASVRALAEFLRGRGHAVVLACQTAEHFGITDFPTRNLHDLATESDAVVVLGGDGTMLSIARELSAHGVPLIGINQGRLGFLTDITVDHMYDAVDEILSGQYVAEERILLKGQILRGGERVFEATAFNDVVVGKGGSGRLIDLEIAIDGEFVYSQRADGLVVTTPTGTTAYALSAGGPIVHPTLEAVALVPICPHTLSARPIVVSGRSRIELHLTYADDARVHFDGQHHFDLQSGDHVWITRANRPITLLHPHSYSYYDTLRQKLHWGKKL</sequence>
<comment type="function">
    <text evidence="1">Involved in the regulation of the intracellular balance of NAD and NADP, and is a key enzyme in the biosynthesis of NADP. Catalyzes specifically the phosphorylation on 2'-hydroxyl of the adenosine moiety of NAD to yield NADP.</text>
</comment>
<comment type="catalytic activity">
    <reaction evidence="1">
        <text>NAD(+) + ATP = ADP + NADP(+) + H(+)</text>
        <dbReference type="Rhea" id="RHEA:18629"/>
        <dbReference type="ChEBI" id="CHEBI:15378"/>
        <dbReference type="ChEBI" id="CHEBI:30616"/>
        <dbReference type="ChEBI" id="CHEBI:57540"/>
        <dbReference type="ChEBI" id="CHEBI:58349"/>
        <dbReference type="ChEBI" id="CHEBI:456216"/>
        <dbReference type="EC" id="2.7.1.23"/>
    </reaction>
</comment>
<comment type="cofactor">
    <cofactor evidence="1">
        <name>a divalent metal cation</name>
        <dbReference type="ChEBI" id="CHEBI:60240"/>
    </cofactor>
</comment>
<comment type="subcellular location">
    <subcellularLocation>
        <location evidence="1">Cytoplasm</location>
    </subcellularLocation>
</comment>
<comment type="similarity">
    <text evidence="1">Belongs to the NAD kinase family.</text>
</comment>
<reference key="1">
    <citation type="journal article" date="2006" name="J. Bacteriol.">
        <title>The genome sequence of the obligately chemolithoautotrophic, facultatively anaerobic bacterium Thiobacillus denitrificans.</title>
        <authorList>
            <person name="Beller H.R."/>
            <person name="Chain P.S."/>
            <person name="Letain T.E."/>
            <person name="Chakicherla A."/>
            <person name="Larimer F.W."/>
            <person name="Richardson P.M."/>
            <person name="Coleman M.A."/>
            <person name="Wood A.P."/>
            <person name="Kelly D.P."/>
        </authorList>
    </citation>
    <scope>NUCLEOTIDE SEQUENCE [LARGE SCALE GENOMIC DNA]</scope>
    <source>
        <strain>ATCC 25259 / T1</strain>
    </source>
</reference>
<feature type="chain" id="PRO_0000229706" description="NAD kinase">
    <location>
        <begin position="1"/>
        <end position="290"/>
    </location>
</feature>
<feature type="active site" description="Proton acceptor" evidence="1">
    <location>
        <position position="73"/>
    </location>
</feature>
<feature type="binding site" evidence="1">
    <location>
        <begin position="73"/>
        <end position="74"/>
    </location>
    <ligand>
        <name>NAD(+)</name>
        <dbReference type="ChEBI" id="CHEBI:57540"/>
    </ligand>
</feature>
<feature type="binding site" evidence="1">
    <location>
        <begin position="147"/>
        <end position="148"/>
    </location>
    <ligand>
        <name>NAD(+)</name>
        <dbReference type="ChEBI" id="CHEBI:57540"/>
    </ligand>
</feature>
<feature type="binding site" evidence="1">
    <location>
        <position position="158"/>
    </location>
    <ligand>
        <name>NAD(+)</name>
        <dbReference type="ChEBI" id="CHEBI:57540"/>
    </ligand>
</feature>
<feature type="binding site" evidence="1">
    <location>
        <position position="175"/>
    </location>
    <ligand>
        <name>NAD(+)</name>
        <dbReference type="ChEBI" id="CHEBI:57540"/>
    </ligand>
</feature>
<feature type="binding site" evidence="1">
    <location>
        <position position="177"/>
    </location>
    <ligand>
        <name>NAD(+)</name>
        <dbReference type="ChEBI" id="CHEBI:57540"/>
    </ligand>
</feature>
<feature type="binding site" evidence="1">
    <location>
        <begin position="188"/>
        <end position="193"/>
    </location>
    <ligand>
        <name>NAD(+)</name>
        <dbReference type="ChEBI" id="CHEBI:57540"/>
    </ligand>
</feature>
<feature type="binding site" evidence="1">
    <location>
        <position position="246"/>
    </location>
    <ligand>
        <name>NAD(+)</name>
        <dbReference type="ChEBI" id="CHEBI:57540"/>
    </ligand>
</feature>
<name>NADK_THIDA</name>